<organism>
    <name type="scientific">Vibrio parahaemolyticus serotype O3:K6 (strain RIMD 2210633)</name>
    <dbReference type="NCBI Taxonomy" id="223926"/>
    <lineage>
        <taxon>Bacteria</taxon>
        <taxon>Pseudomonadati</taxon>
        <taxon>Pseudomonadota</taxon>
        <taxon>Gammaproteobacteria</taxon>
        <taxon>Vibrionales</taxon>
        <taxon>Vibrionaceae</taxon>
        <taxon>Vibrio</taxon>
    </lineage>
</organism>
<name>TRPB1_VIBPA</name>
<proteinExistence type="inferred from homology"/>
<dbReference type="EC" id="4.2.1.20"/>
<dbReference type="EMBL" id="X17149">
    <property type="protein sequence ID" value="CAA35035.1"/>
    <property type="molecule type" value="Genomic_DNA"/>
</dbReference>
<dbReference type="EMBL" id="BA000031">
    <property type="protein sequence ID" value="BAC60223.1"/>
    <property type="molecule type" value="Genomic_DNA"/>
</dbReference>
<dbReference type="RefSeq" id="NP_798339.1">
    <property type="nucleotide sequence ID" value="NC_004603.1"/>
</dbReference>
<dbReference type="RefSeq" id="WP_005481609.1">
    <property type="nucleotide sequence ID" value="NC_004603.1"/>
</dbReference>
<dbReference type="SMR" id="P22097"/>
<dbReference type="GeneID" id="1189471"/>
<dbReference type="KEGG" id="vpa:VP1960"/>
<dbReference type="PATRIC" id="fig|223926.6.peg.1875"/>
<dbReference type="eggNOG" id="COG0133">
    <property type="taxonomic scope" value="Bacteria"/>
</dbReference>
<dbReference type="HOGENOM" id="CLU_016734_3_1_6"/>
<dbReference type="UniPathway" id="UPA00035">
    <property type="reaction ID" value="UER00044"/>
</dbReference>
<dbReference type="Proteomes" id="UP000002493">
    <property type="component" value="Chromosome 1"/>
</dbReference>
<dbReference type="GO" id="GO:0005737">
    <property type="term" value="C:cytoplasm"/>
    <property type="evidence" value="ECO:0007669"/>
    <property type="project" value="TreeGrafter"/>
</dbReference>
<dbReference type="GO" id="GO:0004834">
    <property type="term" value="F:tryptophan synthase activity"/>
    <property type="evidence" value="ECO:0007669"/>
    <property type="project" value="UniProtKB-UniRule"/>
</dbReference>
<dbReference type="CDD" id="cd06446">
    <property type="entry name" value="Trp-synth_B"/>
    <property type="match status" value="1"/>
</dbReference>
<dbReference type="FunFam" id="3.40.50.1100:FF:000001">
    <property type="entry name" value="Tryptophan synthase beta chain"/>
    <property type="match status" value="1"/>
</dbReference>
<dbReference type="FunFam" id="3.40.50.1100:FF:000004">
    <property type="entry name" value="Tryptophan synthase beta chain"/>
    <property type="match status" value="1"/>
</dbReference>
<dbReference type="Gene3D" id="3.40.50.1100">
    <property type="match status" value="2"/>
</dbReference>
<dbReference type="HAMAP" id="MF_00133">
    <property type="entry name" value="Trp_synth_beta"/>
    <property type="match status" value="1"/>
</dbReference>
<dbReference type="InterPro" id="IPR006653">
    <property type="entry name" value="Trp_synth_b_CS"/>
</dbReference>
<dbReference type="InterPro" id="IPR006654">
    <property type="entry name" value="Trp_synth_beta"/>
</dbReference>
<dbReference type="InterPro" id="IPR023026">
    <property type="entry name" value="Trp_synth_beta/beta-like"/>
</dbReference>
<dbReference type="InterPro" id="IPR001926">
    <property type="entry name" value="TrpB-like_PALP"/>
</dbReference>
<dbReference type="InterPro" id="IPR036052">
    <property type="entry name" value="TrpB-like_PALP_sf"/>
</dbReference>
<dbReference type="NCBIfam" id="TIGR00263">
    <property type="entry name" value="trpB"/>
    <property type="match status" value="1"/>
</dbReference>
<dbReference type="PANTHER" id="PTHR48077:SF3">
    <property type="entry name" value="TRYPTOPHAN SYNTHASE"/>
    <property type="match status" value="1"/>
</dbReference>
<dbReference type="PANTHER" id="PTHR48077">
    <property type="entry name" value="TRYPTOPHAN SYNTHASE-RELATED"/>
    <property type="match status" value="1"/>
</dbReference>
<dbReference type="Pfam" id="PF00291">
    <property type="entry name" value="PALP"/>
    <property type="match status" value="1"/>
</dbReference>
<dbReference type="PIRSF" id="PIRSF001413">
    <property type="entry name" value="Trp_syn_beta"/>
    <property type="match status" value="1"/>
</dbReference>
<dbReference type="SUPFAM" id="SSF53686">
    <property type="entry name" value="Tryptophan synthase beta subunit-like PLP-dependent enzymes"/>
    <property type="match status" value="1"/>
</dbReference>
<dbReference type="PROSITE" id="PS00168">
    <property type="entry name" value="TRP_SYNTHASE_BETA"/>
    <property type="match status" value="1"/>
</dbReference>
<feature type="chain" id="PRO_0000099019" description="Tryptophan synthase beta chain 1">
    <location>
        <begin position="1"/>
        <end position="396"/>
    </location>
</feature>
<feature type="modified residue" description="N6-(pyridoxal phosphate)lysine" evidence="1">
    <location>
        <position position="86"/>
    </location>
</feature>
<feature type="sequence conflict" description="In Ref. 1; CAA35035." evidence="2" ref="1">
    <original>K</original>
    <variation>E</variation>
    <location>
        <position position="25"/>
    </location>
</feature>
<evidence type="ECO:0000250" key="1"/>
<evidence type="ECO:0000305" key="2"/>
<keyword id="KW-0028">Amino-acid biosynthesis</keyword>
<keyword id="KW-0057">Aromatic amino acid biosynthesis</keyword>
<keyword id="KW-0456">Lyase</keyword>
<keyword id="KW-0663">Pyridoxal phosphate</keyword>
<keyword id="KW-0822">Tryptophan biosynthesis</keyword>
<protein>
    <recommendedName>
        <fullName>Tryptophan synthase beta chain 1</fullName>
        <ecNumber>4.2.1.20</ecNumber>
    </recommendedName>
</protein>
<sequence>MAKLNAYFGEYGGQYVPQILVPALKQLEQAFIDAQEDPEFRSEFMTLLQEYAGRPTALTLTRNLTKGTKTKLYLKREDLLHGGAHKTNQVLGQALLAKRMGKHEIIAETGAGQHGVATALACALLGLKCRVYMGAKDVERQSPNVFRMKLMGAEVIPVHSGSATLKDACNEALRDWSGSYEDAHYLLGTAAGPHPFPTIVREFQRMIGEETKNQILAREGRLPDAVIACVGGGSNAIGMFADFIEEESVRLIGVEPAGKGIDTDQHGAPLKHGKTGIFFGMKAPLMQDENGQVEESYSVSAGLDFPSVGPQHAHLNAIGRAEYDNVTDDEALEAFQELARSEGIIPALESSHALAHALRMARENPEKEQLLVVNLSGRGDKDIFTVHAILEEKGVI</sequence>
<comment type="function">
    <text evidence="1">The beta subunit is responsible for the synthesis of L-tryptophan from indole and L-serine.</text>
</comment>
<comment type="catalytic activity">
    <reaction>
        <text>(1S,2R)-1-C-(indol-3-yl)glycerol 3-phosphate + L-serine = D-glyceraldehyde 3-phosphate + L-tryptophan + H2O</text>
        <dbReference type="Rhea" id="RHEA:10532"/>
        <dbReference type="ChEBI" id="CHEBI:15377"/>
        <dbReference type="ChEBI" id="CHEBI:33384"/>
        <dbReference type="ChEBI" id="CHEBI:57912"/>
        <dbReference type="ChEBI" id="CHEBI:58866"/>
        <dbReference type="ChEBI" id="CHEBI:59776"/>
        <dbReference type="EC" id="4.2.1.20"/>
    </reaction>
</comment>
<comment type="cofactor">
    <cofactor evidence="1">
        <name>pyridoxal 5'-phosphate</name>
        <dbReference type="ChEBI" id="CHEBI:597326"/>
    </cofactor>
</comment>
<comment type="pathway">
    <text>Amino-acid biosynthesis; L-tryptophan biosynthesis; L-tryptophan from chorismate: step 5/5.</text>
</comment>
<comment type="subunit">
    <text evidence="1">Tetramer of two alpha and two beta chains.</text>
</comment>
<comment type="similarity">
    <text evidence="2">Belongs to the TrpB family.</text>
</comment>
<accession>P22097</accession>
<reference key="1">
    <citation type="journal article" date="1991" name="DNA Seq.">
        <title>Sequence and features of the tryptophan operon of Vibrio parahemolyticus.</title>
        <authorList>
            <person name="Crawford I.P."/>
            <person name="Han C.Y."/>
            <person name="Silverman M."/>
        </authorList>
    </citation>
    <scope>NUCLEOTIDE SEQUENCE [GENOMIC DNA]</scope>
    <source>
        <strain>BB22</strain>
    </source>
</reference>
<reference key="2">
    <citation type="journal article" date="2003" name="Lancet">
        <title>Genome sequence of Vibrio parahaemolyticus: a pathogenic mechanism distinct from that of V. cholerae.</title>
        <authorList>
            <person name="Makino K."/>
            <person name="Oshima K."/>
            <person name="Kurokawa K."/>
            <person name="Yokoyama K."/>
            <person name="Uda T."/>
            <person name="Tagomori K."/>
            <person name="Iijima Y."/>
            <person name="Najima M."/>
            <person name="Nakano M."/>
            <person name="Yamashita A."/>
            <person name="Kubota Y."/>
            <person name="Kimura S."/>
            <person name="Yasunaga T."/>
            <person name="Honda T."/>
            <person name="Shinagawa H."/>
            <person name="Hattori M."/>
            <person name="Iida T."/>
        </authorList>
    </citation>
    <scope>NUCLEOTIDE SEQUENCE [LARGE SCALE GENOMIC DNA]</scope>
    <source>
        <strain>RIMD 2210633</strain>
    </source>
</reference>
<gene>
    <name type="primary">trpB1</name>
    <name type="synonym">trpB</name>
    <name type="ordered locus">VP1960</name>
</gene>